<comment type="similarity">
    <text evidence="1">Belongs to the PPR family. PCMP-E subfamily.</text>
</comment>
<comment type="online information" name="Pentatricopeptide repeat proteins">
    <link uri="https://ppr.plantenergy.uwa.edu.au"/>
</comment>
<dbReference type="EMBL" id="AB022217">
    <property type="protein sequence ID" value="BAB02752.1"/>
    <property type="molecule type" value="Genomic_DNA"/>
</dbReference>
<dbReference type="EMBL" id="CP002686">
    <property type="protein sequence ID" value="AEE75843.1"/>
    <property type="molecule type" value="Genomic_DNA"/>
</dbReference>
<dbReference type="RefSeq" id="NP_188283.1">
    <property type="nucleotide sequence ID" value="NM_112534.2"/>
</dbReference>
<dbReference type="SMR" id="Q9LUS3"/>
<dbReference type="FunCoup" id="Q9LUS3">
    <property type="interactions" value="32"/>
</dbReference>
<dbReference type="PaxDb" id="3702-AT3G16610.1"/>
<dbReference type="ProteomicsDB" id="249182"/>
<dbReference type="EnsemblPlants" id="AT3G16610.1">
    <property type="protein sequence ID" value="AT3G16610.1"/>
    <property type="gene ID" value="AT3G16610"/>
</dbReference>
<dbReference type="GeneID" id="820912"/>
<dbReference type="Gramene" id="AT3G16610.1">
    <property type="protein sequence ID" value="AT3G16610.1"/>
    <property type="gene ID" value="AT3G16610"/>
</dbReference>
<dbReference type="KEGG" id="ath:AT3G16610"/>
<dbReference type="Araport" id="AT3G16610"/>
<dbReference type="TAIR" id="AT3G16610"/>
<dbReference type="eggNOG" id="KOG4197">
    <property type="taxonomic scope" value="Eukaryota"/>
</dbReference>
<dbReference type="HOGENOM" id="CLU_002706_15_10_1"/>
<dbReference type="InParanoid" id="Q9LUS3"/>
<dbReference type="OMA" id="MQACNVE"/>
<dbReference type="PhylomeDB" id="Q9LUS3"/>
<dbReference type="PRO" id="PR:Q9LUS3"/>
<dbReference type="Proteomes" id="UP000006548">
    <property type="component" value="Chromosome 3"/>
</dbReference>
<dbReference type="ExpressionAtlas" id="Q9LUS3">
    <property type="expression patterns" value="baseline and differential"/>
</dbReference>
<dbReference type="GO" id="GO:0003723">
    <property type="term" value="F:RNA binding"/>
    <property type="evidence" value="ECO:0007669"/>
    <property type="project" value="InterPro"/>
</dbReference>
<dbReference type="GO" id="GO:0009451">
    <property type="term" value="P:RNA modification"/>
    <property type="evidence" value="ECO:0007669"/>
    <property type="project" value="InterPro"/>
</dbReference>
<dbReference type="FunFam" id="1.25.40.10:FF:001093">
    <property type="entry name" value="Pentatricopeptide repeat-containing protein At2g34400"/>
    <property type="match status" value="1"/>
</dbReference>
<dbReference type="FunFam" id="1.25.40.10:FF:000682">
    <property type="entry name" value="Pentatricopeptide repeat-containing protein At3g16610"/>
    <property type="match status" value="1"/>
</dbReference>
<dbReference type="FunFam" id="1.25.40.10:FF:001832">
    <property type="entry name" value="Pentatricopeptide repeat-containing protein At3g16610"/>
    <property type="match status" value="1"/>
</dbReference>
<dbReference type="Gene3D" id="1.25.40.10">
    <property type="entry name" value="Tetratricopeptide repeat domain"/>
    <property type="match status" value="5"/>
</dbReference>
<dbReference type="InterPro" id="IPR046848">
    <property type="entry name" value="E_motif"/>
</dbReference>
<dbReference type="InterPro" id="IPR002885">
    <property type="entry name" value="Pentatricopeptide_rpt"/>
</dbReference>
<dbReference type="InterPro" id="IPR046960">
    <property type="entry name" value="PPR_At4g14850-like_plant"/>
</dbReference>
<dbReference type="InterPro" id="IPR011990">
    <property type="entry name" value="TPR-like_helical_dom_sf"/>
</dbReference>
<dbReference type="NCBIfam" id="TIGR00756">
    <property type="entry name" value="PPR"/>
    <property type="match status" value="7"/>
</dbReference>
<dbReference type="PANTHER" id="PTHR47926">
    <property type="entry name" value="PENTATRICOPEPTIDE REPEAT-CONTAINING PROTEIN"/>
    <property type="match status" value="1"/>
</dbReference>
<dbReference type="Pfam" id="PF20431">
    <property type="entry name" value="E_motif"/>
    <property type="match status" value="1"/>
</dbReference>
<dbReference type="Pfam" id="PF01535">
    <property type="entry name" value="PPR"/>
    <property type="match status" value="4"/>
</dbReference>
<dbReference type="Pfam" id="PF13041">
    <property type="entry name" value="PPR_2"/>
    <property type="match status" value="3"/>
</dbReference>
<dbReference type="PROSITE" id="PS51375">
    <property type="entry name" value="PPR"/>
    <property type="match status" value="13"/>
</dbReference>
<keyword id="KW-1185">Reference proteome</keyword>
<keyword id="KW-0677">Repeat</keyword>
<accession>Q9LUS3</accession>
<proteinExistence type="evidence at transcript level"/>
<organism>
    <name type="scientific">Arabidopsis thaliana</name>
    <name type="common">Mouse-ear cress</name>
    <dbReference type="NCBI Taxonomy" id="3702"/>
    <lineage>
        <taxon>Eukaryota</taxon>
        <taxon>Viridiplantae</taxon>
        <taxon>Streptophyta</taxon>
        <taxon>Embryophyta</taxon>
        <taxon>Tracheophyta</taxon>
        <taxon>Spermatophyta</taxon>
        <taxon>Magnoliopsida</taxon>
        <taxon>eudicotyledons</taxon>
        <taxon>Gunneridae</taxon>
        <taxon>Pentapetalae</taxon>
        <taxon>rosids</taxon>
        <taxon>malvids</taxon>
        <taxon>Brassicales</taxon>
        <taxon>Brassicaceae</taxon>
        <taxon>Camelineae</taxon>
        <taxon>Arabidopsis</taxon>
    </lineage>
</organism>
<sequence length="654" mass="72846">MFLSLLETCIRSRNLVLGQVIHQHLLKRSLTLSSSTVLVNLTRLYASCNEVELARHVFDEIPHPRINPIAWDLMIRAYASNDFAEKALDLYYKMLNSGVRPTKYTYPFVLKACAGLRAIDDGKLIHSHVNCSDFATDMYVCTALVDFYAKCGELEMAIKVFDEMPKRDMVAWNAMISGFSLHCCLTDVIGLFLDMRRIDGLSPNLSTIVGMFPALGRAGALREGKAVHGYCTRMGFSNDLVVKTGILDVYAKSKCIIYARRVFDLDFKKNEVTWSAMIGGYVENEMIKEAGEVFFQMLVNDNVAMVTPVAIGLILMGCARFGDLSGGRCVHCYAVKAGFILDLTVQNTIISFYAKYGSLCDAFRQFSEIGLKDVISYNSLITGCVVNCRPEESFRLFHEMRTSGIRPDITTLLGVLTACSHLAALGHGSSCHGYCVVHGYAVNTSICNALMDMYTKCGKLDVAKRVFDTMHKRDIVSWNTMLFGFGIHGLGKEALSLFNSMQETGVNPDEVTLLAILSACSHSGLVDEGKQLFNSMSRGDFNVIPRIDHYNCMTDLLARAGYLDEAYDFVNKMPFEPDIRVLGTLLSACWTYKNAELGNEVSKKMQSLGETTESLVLLSNTYSAAERWEDAARIRMIQKKRGLLKTPGYSWVDV</sequence>
<evidence type="ECO:0000305" key="1"/>
<feature type="chain" id="PRO_0000356096" description="Pentatricopeptide repeat-containing protein At3g16610">
    <location>
        <begin position="1"/>
        <end position="654"/>
    </location>
</feature>
<feature type="repeat" description="PPR 1">
    <location>
        <begin position="1"/>
        <end position="32"/>
    </location>
</feature>
<feature type="repeat" description="PPR 2">
    <location>
        <begin position="34"/>
        <end position="64"/>
    </location>
</feature>
<feature type="repeat" description="PPR 3">
    <location>
        <begin position="67"/>
        <end position="101"/>
    </location>
</feature>
<feature type="repeat" description="PPR 4">
    <location>
        <begin position="102"/>
        <end position="136"/>
    </location>
</feature>
<feature type="repeat" description="PPR 5">
    <location>
        <begin position="137"/>
        <end position="171"/>
    </location>
</feature>
<feature type="repeat" description="PPR 6">
    <location>
        <begin position="172"/>
        <end position="203"/>
    </location>
</feature>
<feature type="repeat" description="PPR 7">
    <location>
        <begin position="204"/>
        <end position="238"/>
    </location>
</feature>
<feature type="repeat" description="PPR 8">
    <location>
        <begin position="239"/>
        <end position="269"/>
    </location>
</feature>
<feature type="repeat" description="PPR 9">
    <location>
        <begin position="270"/>
        <end position="304"/>
    </location>
</feature>
<feature type="repeat" description="PPR 10">
    <location>
        <begin position="307"/>
        <end position="341"/>
    </location>
</feature>
<feature type="repeat" description="PPR 11">
    <location>
        <begin position="342"/>
        <end position="372"/>
    </location>
</feature>
<feature type="repeat" description="PPR 12">
    <location>
        <begin position="373"/>
        <end position="407"/>
    </location>
</feature>
<feature type="repeat" description="PPR 13">
    <location>
        <begin position="408"/>
        <end position="442"/>
    </location>
</feature>
<feature type="repeat" description="PPR 14">
    <location>
        <begin position="443"/>
        <end position="473"/>
    </location>
</feature>
<feature type="repeat" description="PPR 15">
    <location>
        <begin position="474"/>
        <end position="508"/>
    </location>
</feature>
<feature type="repeat" description="PPR 16">
    <location>
        <begin position="509"/>
        <end position="543"/>
    </location>
</feature>
<feature type="repeat" description="PPR 17">
    <location>
        <begin position="546"/>
        <end position="576"/>
    </location>
</feature>
<feature type="region of interest" description="Type E motif; degenerate">
    <location>
        <begin position="581"/>
        <end position="654"/>
    </location>
</feature>
<gene>
    <name type="primary">PCMP-E91</name>
    <name type="ordered locus">At3g16610</name>
    <name type="ORF">MGL6.8</name>
</gene>
<name>PP237_ARATH</name>
<reference key="1">
    <citation type="journal article" date="2000" name="DNA Res.">
        <title>Structural analysis of Arabidopsis thaliana chromosome 3. I. Sequence features of the regions of 4,504,864 bp covered by sixty P1 and TAC clones.</title>
        <authorList>
            <person name="Sato S."/>
            <person name="Nakamura Y."/>
            <person name="Kaneko T."/>
            <person name="Katoh T."/>
            <person name="Asamizu E."/>
            <person name="Tabata S."/>
        </authorList>
    </citation>
    <scope>NUCLEOTIDE SEQUENCE [LARGE SCALE GENOMIC DNA]</scope>
    <source>
        <strain>cv. Columbia</strain>
    </source>
</reference>
<reference key="2">
    <citation type="journal article" date="2017" name="Plant J.">
        <title>Araport11: a complete reannotation of the Arabidopsis thaliana reference genome.</title>
        <authorList>
            <person name="Cheng C.Y."/>
            <person name="Krishnakumar V."/>
            <person name="Chan A.P."/>
            <person name="Thibaud-Nissen F."/>
            <person name="Schobel S."/>
            <person name="Town C.D."/>
        </authorList>
    </citation>
    <scope>GENOME REANNOTATION</scope>
    <source>
        <strain>cv. Columbia</strain>
    </source>
</reference>
<reference key="3">
    <citation type="journal article" date="2004" name="Plant Cell">
        <title>Genome-wide analysis of Arabidopsis pentatricopeptide repeat proteins reveals their essential role in organelle biogenesis.</title>
        <authorList>
            <person name="Lurin C."/>
            <person name="Andres C."/>
            <person name="Aubourg S."/>
            <person name="Bellaoui M."/>
            <person name="Bitton F."/>
            <person name="Bruyere C."/>
            <person name="Caboche M."/>
            <person name="Debast C."/>
            <person name="Gualberto J."/>
            <person name="Hoffmann B."/>
            <person name="Lecharny A."/>
            <person name="Le Ret M."/>
            <person name="Martin-Magniette M.-L."/>
            <person name="Mireau H."/>
            <person name="Peeters N."/>
            <person name="Renou J.-P."/>
            <person name="Szurek B."/>
            <person name="Taconnat L."/>
            <person name="Small I."/>
        </authorList>
    </citation>
    <scope>GENE FAMILY</scope>
</reference>
<protein>
    <recommendedName>
        <fullName>Pentatricopeptide repeat-containing protein At3g16610</fullName>
    </recommendedName>
</protein>